<evidence type="ECO:0000255" key="1">
    <source>
        <dbReference type="HAMAP-Rule" id="MF_01173"/>
    </source>
</evidence>
<keyword id="KW-0032">Aminotransferase</keyword>
<keyword id="KW-0056">Arginine metabolism</keyword>
<keyword id="KW-0663">Pyridoxal phosphate</keyword>
<keyword id="KW-0808">Transferase</keyword>
<organism>
    <name type="scientific">Escherichia coli (strain UTI89 / UPEC)</name>
    <dbReference type="NCBI Taxonomy" id="364106"/>
    <lineage>
        <taxon>Bacteria</taxon>
        <taxon>Pseudomonadati</taxon>
        <taxon>Pseudomonadota</taxon>
        <taxon>Gammaproteobacteria</taxon>
        <taxon>Enterobacterales</taxon>
        <taxon>Enterobacteriaceae</taxon>
        <taxon>Escherichia</taxon>
    </lineage>
</organism>
<feature type="chain" id="PRO_0000262439" description="Succinylornithine transaminase">
    <location>
        <begin position="1"/>
        <end position="406"/>
    </location>
</feature>
<feature type="modified residue" description="N6-(pyridoxal phosphate)lysine" evidence="1">
    <location>
        <position position="252"/>
    </location>
</feature>
<protein>
    <recommendedName>
        <fullName evidence="1">Succinylornithine transaminase</fullName>
        <shortName>SOAT</shortName>
        <ecNumber evidence="1">2.6.1.81</ecNumber>
    </recommendedName>
    <alternativeName>
        <fullName evidence="1">Succinylornithine aminotransferase</fullName>
    </alternativeName>
</protein>
<comment type="function">
    <text evidence="1">Catalyzes the transamination of N(2)-succinylornithine and alpha-ketoglutarate into N(2)-succinylglutamate semialdehyde and glutamate. Can also act as an acetylornithine aminotransferase.</text>
</comment>
<comment type="catalytic activity">
    <reaction evidence="1">
        <text>N(2)-succinyl-L-ornithine + 2-oxoglutarate = N-succinyl-L-glutamate 5-semialdehyde + L-glutamate</text>
        <dbReference type="Rhea" id="RHEA:16953"/>
        <dbReference type="ChEBI" id="CHEBI:16810"/>
        <dbReference type="ChEBI" id="CHEBI:29985"/>
        <dbReference type="ChEBI" id="CHEBI:58514"/>
        <dbReference type="ChEBI" id="CHEBI:58520"/>
        <dbReference type="EC" id="2.6.1.81"/>
    </reaction>
</comment>
<comment type="cofactor">
    <cofactor evidence="1">
        <name>pyridoxal 5'-phosphate</name>
        <dbReference type="ChEBI" id="CHEBI:597326"/>
    </cofactor>
</comment>
<comment type="pathway">
    <text evidence="1">Amino-acid degradation; L-arginine degradation via AST pathway; L-glutamate and succinate from L-arginine: step 3/5.</text>
</comment>
<comment type="similarity">
    <text evidence="1">Belongs to the class-III pyridoxal-phosphate-dependent aminotransferase family. AstC subfamily.</text>
</comment>
<sequence length="406" mass="43558">MSQPITRENFDEWMIPVYAPAPFIPVRGEGSRLWDQQGKEYIDFAGGIAVNALGHAHPELREALNEQASKFWHTGNGYTNEPVLRLAKKLIDATFADRVFFCNSGAEANEAALKLARKFAHDRYGSHKSGIVAFKNAFHGRTLFTVSAGGQPAYSQDFAPLPPDIRHAAYNDINSASALIDDATCAVIVEPIQGEGGVVPASNAFLQGLRELCDRHNALLIFDEVQTGVGRTGELYACMHYGVTPDLLTTAKALGGGFPVGALLATEECASVMTVGTHGTTYGGNPLASAVAGKVLDLINTPEMLNGVKQRHDWFVERLNSINHHYSLFSEVRGLGLLIGCVLNADYAGQAKQISQEAVKAGVMVLIAGGNVVRFAPALNVSEEEVTTGLDRFAAACEHFVSRGSS</sequence>
<gene>
    <name evidence="1" type="primary">astC</name>
    <name evidence="1" type="synonym">argM</name>
    <name type="ordered locus">UTI89_C1943</name>
</gene>
<accession>Q1RB45</accession>
<proteinExistence type="inferred from homology"/>
<reference key="1">
    <citation type="journal article" date="2006" name="Proc. Natl. Acad. Sci. U.S.A.">
        <title>Identification of genes subject to positive selection in uropathogenic strains of Escherichia coli: a comparative genomics approach.</title>
        <authorList>
            <person name="Chen S.L."/>
            <person name="Hung C.-S."/>
            <person name="Xu J."/>
            <person name="Reigstad C.S."/>
            <person name="Magrini V."/>
            <person name="Sabo A."/>
            <person name="Blasiar D."/>
            <person name="Bieri T."/>
            <person name="Meyer R.R."/>
            <person name="Ozersky P."/>
            <person name="Armstrong J.R."/>
            <person name="Fulton R.S."/>
            <person name="Latreille J.P."/>
            <person name="Spieth J."/>
            <person name="Hooton T.M."/>
            <person name="Mardis E.R."/>
            <person name="Hultgren S.J."/>
            <person name="Gordon J.I."/>
        </authorList>
    </citation>
    <scope>NUCLEOTIDE SEQUENCE [LARGE SCALE GENOMIC DNA]</scope>
    <source>
        <strain>UTI89 / UPEC</strain>
    </source>
</reference>
<dbReference type="EC" id="2.6.1.81" evidence="1"/>
<dbReference type="EMBL" id="CP000243">
    <property type="protein sequence ID" value="ABE07419.1"/>
    <property type="molecule type" value="Genomic_DNA"/>
</dbReference>
<dbReference type="RefSeq" id="WP_000081990.1">
    <property type="nucleotide sequence ID" value="NZ_CP064825.1"/>
</dbReference>
<dbReference type="SMR" id="Q1RB45"/>
<dbReference type="KEGG" id="eci:UTI89_C1943"/>
<dbReference type="HOGENOM" id="CLU_016922_10_1_6"/>
<dbReference type="UniPathway" id="UPA00185">
    <property type="reaction ID" value="UER00281"/>
</dbReference>
<dbReference type="Proteomes" id="UP000001952">
    <property type="component" value="Chromosome"/>
</dbReference>
<dbReference type="GO" id="GO:0042802">
    <property type="term" value="F:identical protein binding"/>
    <property type="evidence" value="ECO:0007669"/>
    <property type="project" value="TreeGrafter"/>
</dbReference>
<dbReference type="GO" id="GO:0030170">
    <property type="term" value="F:pyridoxal phosphate binding"/>
    <property type="evidence" value="ECO:0007669"/>
    <property type="project" value="UniProtKB-UniRule"/>
</dbReference>
<dbReference type="GO" id="GO:0043825">
    <property type="term" value="F:succinylornithine transaminase activity"/>
    <property type="evidence" value="ECO:0007669"/>
    <property type="project" value="UniProtKB-EC"/>
</dbReference>
<dbReference type="GO" id="GO:1901607">
    <property type="term" value="P:alpha-amino acid biosynthetic process"/>
    <property type="evidence" value="ECO:0007669"/>
    <property type="project" value="UniProtKB-ARBA"/>
</dbReference>
<dbReference type="GO" id="GO:0019544">
    <property type="term" value="P:arginine catabolic process to glutamate"/>
    <property type="evidence" value="ECO:0007669"/>
    <property type="project" value="UniProtKB-UniRule"/>
</dbReference>
<dbReference type="GO" id="GO:0019545">
    <property type="term" value="P:arginine catabolic process to succinate"/>
    <property type="evidence" value="ECO:0007669"/>
    <property type="project" value="UniProtKB-UniRule"/>
</dbReference>
<dbReference type="GO" id="GO:0006593">
    <property type="term" value="P:ornithine catabolic process"/>
    <property type="evidence" value="ECO:0007669"/>
    <property type="project" value="InterPro"/>
</dbReference>
<dbReference type="CDD" id="cd00610">
    <property type="entry name" value="OAT_like"/>
    <property type="match status" value="1"/>
</dbReference>
<dbReference type="FunFam" id="3.40.640.10:FF:000004">
    <property type="entry name" value="Acetylornithine aminotransferase"/>
    <property type="match status" value="1"/>
</dbReference>
<dbReference type="FunFam" id="3.90.1150.10:FF:000009">
    <property type="entry name" value="Succinylornithine transaminase"/>
    <property type="match status" value="1"/>
</dbReference>
<dbReference type="Gene3D" id="3.90.1150.10">
    <property type="entry name" value="Aspartate Aminotransferase, domain 1"/>
    <property type="match status" value="1"/>
</dbReference>
<dbReference type="Gene3D" id="3.40.640.10">
    <property type="entry name" value="Type I PLP-dependent aspartate aminotransferase-like (Major domain)"/>
    <property type="match status" value="1"/>
</dbReference>
<dbReference type="HAMAP" id="MF_01107">
    <property type="entry name" value="ArgD_aminotrans_3"/>
    <property type="match status" value="1"/>
</dbReference>
<dbReference type="HAMAP" id="MF_01173">
    <property type="entry name" value="AstC_aminotrans_3"/>
    <property type="match status" value="1"/>
</dbReference>
<dbReference type="InterPro" id="IPR017652">
    <property type="entry name" value="Ac/SucOrn_transaminase_bac"/>
</dbReference>
<dbReference type="InterPro" id="IPR004636">
    <property type="entry name" value="AcOrn/SuccOrn_fam"/>
</dbReference>
<dbReference type="InterPro" id="IPR005814">
    <property type="entry name" value="Aminotrans_3"/>
</dbReference>
<dbReference type="InterPro" id="IPR049704">
    <property type="entry name" value="Aminotrans_3_PPA_site"/>
</dbReference>
<dbReference type="InterPro" id="IPR050103">
    <property type="entry name" value="Class-III_PLP-dep_AT"/>
</dbReference>
<dbReference type="InterPro" id="IPR015424">
    <property type="entry name" value="PyrdxlP-dep_Trfase"/>
</dbReference>
<dbReference type="InterPro" id="IPR015421">
    <property type="entry name" value="PyrdxlP-dep_Trfase_major"/>
</dbReference>
<dbReference type="InterPro" id="IPR015422">
    <property type="entry name" value="PyrdxlP-dep_Trfase_small"/>
</dbReference>
<dbReference type="InterPro" id="IPR026330">
    <property type="entry name" value="SOAT"/>
</dbReference>
<dbReference type="NCBIfam" id="TIGR03246">
    <property type="entry name" value="arg_catab_astC"/>
    <property type="match status" value="1"/>
</dbReference>
<dbReference type="NCBIfam" id="TIGR00707">
    <property type="entry name" value="argD"/>
    <property type="match status" value="1"/>
</dbReference>
<dbReference type="NCBIfam" id="NF002325">
    <property type="entry name" value="PRK01278.1"/>
    <property type="match status" value="1"/>
</dbReference>
<dbReference type="NCBIfam" id="NF003468">
    <property type="entry name" value="PRK05093.1"/>
    <property type="match status" value="1"/>
</dbReference>
<dbReference type="NCBIfam" id="NF009047">
    <property type="entry name" value="PRK12381.1"/>
    <property type="match status" value="1"/>
</dbReference>
<dbReference type="PANTHER" id="PTHR11986">
    <property type="entry name" value="AMINOTRANSFERASE CLASS III"/>
    <property type="match status" value="1"/>
</dbReference>
<dbReference type="PANTHER" id="PTHR11986:SF113">
    <property type="entry name" value="SUCCINYLORNITHINE TRANSAMINASE"/>
    <property type="match status" value="1"/>
</dbReference>
<dbReference type="Pfam" id="PF00202">
    <property type="entry name" value="Aminotran_3"/>
    <property type="match status" value="1"/>
</dbReference>
<dbReference type="PIRSF" id="PIRSF000521">
    <property type="entry name" value="Transaminase_4ab_Lys_Orn"/>
    <property type="match status" value="1"/>
</dbReference>
<dbReference type="SUPFAM" id="SSF53383">
    <property type="entry name" value="PLP-dependent transferases"/>
    <property type="match status" value="1"/>
</dbReference>
<dbReference type="PROSITE" id="PS00600">
    <property type="entry name" value="AA_TRANSFER_CLASS_3"/>
    <property type="match status" value="1"/>
</dbReference>
<name>ASTC_ECOUT</name>